<name>H2B_MYCMD</name>
<accession>Q4PEF8</accession>
<accession>A0A0D1CV77</accession>
<protein>
    <recommendedName>
        <fullName>Histone H2B</fullName>
    </recommendedName>
</protein>
<proteinExistence type="inferred from homology"/>
<keyword id="KW-0007">Acetylation</keyword>
<keyword id="KW-0158">Chromosome</keyword>
<keyword id="KW-0238">DNA-binding</keyword>
<keyword id="KW-1017">Isopeptide bond</keyword>
<keyword id="KW-0544">Nucleosome core</keyword>
<keyword id="KW-0539">Nucleus</keyword>
<keyword id="KW-0597">Phosphoprotein</keyword>
<keyword id="KW-1185">Reference proteome</keyword>
<keyword id="KW-0832">Ubl conjugation</keyword>
<organism>
    <name type="scientific">Mycosarcoma maydis</name>
    <name type="common">Corn smut fungus</name>
    <name type="synonym">Ustilago maydis</name>
    <dbReference type="NCBI Taxonomy" id="5270"/>
    <lineage>
        <taxon>Eukaryota</taxon>
        <taxon>Fungi</taxon>
        <taxon>Dikarya</taxon>
        <taxon>Basidiomycota</taxon>
        <taxon>Ustilaginomycotina</taxon>
        <taxon>Ustilaginomycetes</taxon>
        <taxon>Ustilaginales</taxon>
        <taxon>Ustilaginaceae</taxon>
        <taxon>Mycosarcoma</taxon>
    </lineage>
</organism>
<evidence type="ECO:0000250" key="1"/>
<evidence type="ECO:0000256" key="2">
    <source>
        <dbReference type="SAM" id="MobiDB-lite"/>
    </source>
</evidence>
<evidence type="ECO:0000305" key="3"/>
<gene>
    <name type="primary">HTB1</name>
    <name type="ORF">UMAG_01505</name>
</gene>
<dbReference type="EMBL" id="CM003142">
    <property type="protein sequence ID" value="KIS70333.1"/>
    <property type="molecule type" value="Genomic_DNA"/>
</dbReference>
<dbReference type="RefSeq" id="XP_011387545.1">
    <property type="nucleotide sequence ID" value="XM_011389243.1"/>
</dbReference>
<dbReference type="SMR" id="Q4PEF8"/>
<dbReference type="FunCoup" id="Q4PEF8">
    <property type="interactions" value="169"/>
</dbReference>
<dbReference type="STRING" id="237631.Q4PEF8"/>
<dbReference type="EnsemblFungi" id="KIS70333">
    <property type="protein sequence ID" value="KIS70333"/>
    <property type="gene ID" value="UMAG_01505"/>
</dbReference>
<dbReference type="GeneID" id="23562493"/>
<dbReference type="KEGG" id="uma:UMAG_01505"/>
<dbReference type="VEuPathDB" id="FungiDB:UMAG_01505"/>
<dbReference type="eggNOG" id="KOG1744">
    <property type="taxonomic scope" value="Eukaryota"/>
</dbReference>
<dbReference type="HOGENOM" id="CLU_075666_1_3_1"/>
<dbReference type="InParanoid" id="Q4PEF8"/>
<dbReference type="OMA" id="RITIEAC"/>
<dbReference type="OrthoDB" id="10254238at2759"/>
<dbReference type="Proteomes" id="UP000000561">
    <property type="component" value="Chromosome 3"/>
</dbReference>
<dbReference type="GO" id="GO:0000786">
    <property type="term" value="C:nucleosome"/>
    <property type="evidence" value="ECO:0007669"/>
    <property type="project" value="UniProtKB-KW"/>
</dbReference>
<dbReference type="GO" id="GO:0005634">
    <property type="term" value="C:nucleus"/>
    <property type="evidence" value="ECO:0007669"/>
    <property type="project" value="UniProtKB-SubCell"/>
</dbReference>
<dbReference type="GO" id="GO:0035861">
    <property type="term" value="C:site of double-strand break"/>
    <property type="evidence" value="ECO:0007669"/>
    <property type="project" value="EnsemblFungi"/>
</dbReference>
<dbReference type="GO" id="GO:0003677">
    <property type="term" value="F:DNA binding"/>
    <property type="evidence" value="ECO:0000318"/>
    <property type="project" value="GO_Central"/>
</dbReference>
<dbReference type="GO" id="GO:0046982">
    <property type="term" value="F:protein heterodimerization activity"/>
    <property type="evidence" value="ECO:0007669"/>
    <property type="project" value="InterPro"/>
</dbReference>
<dbReference type="GO" id="GO:0030527">
    <property type="term" value="F:structural constituent of chromatin"/>
    <property type="evidence" value="ECO:0007669"/>
    <property type="project" value="InterPro"/>
</dbReference>
<dbReference type="CDD" id="cd22910">
    <property type="entry name" value="HFD_H2B"/>
    <property type="match status" value="1"/>
</dbReference>
<dbReference type="FunFam" id="1.10.20.10:FF:000014">
    <property type="entry name" value="Histone H2B"/>
    <property type="match status" value="1"/>
</dbReference>
<dbReference type="Gene3D" id="1.10.20.10">
    <property type="entry name" value="Histone, subunit A"/>
    <property type="match status" value="1"/>
</dbReference>
<dbReference type="InterPro" id="IPR009072">
    <property type="entry name" value="Histone-fold"/>
</dbReference>
<dbReference type="InterPro" id="IPR007125">
    <property type="entry name" value="Histone_H2A/H2B/H3"/>
</dbReference>
<dbReference type="InterPro" id="IPR000558">
    <property type="entry name" value="Histone_H2B"/>
</dbReference>
<dbReference type="InterPro" id="IPR055333">
    <property type="entry name" value="HISTONE_H2B_site"/>
</dbReference>
<dbReference type="PANTHER" id="PTHR23428">
    <property type="entry name" value="HISTONE H2B"/>
    <property type="match status" value="1"/>
</dbReference>
<dbReference type="Pfam" id="PF00125">
    <property type="entry name" value="Histone"/>
    <property type="match status" value="1"/>
</dbReference>
<dbReference type="PRINTS" id="PR00621">
    <property type="entry name" value="HISTONEH2B"/>
</dbReference>
<dbReference type="SMART" id="SM00427">
    <property type="entry name" value="H2B"/>
    <property type="match status" value="1"/>
</dbReference>
<dbReference type="SUPFAM" id="SSF47113">
    <property type="entry name" value="Histone-fold"/>
    <property type="match status" value="1"/>
</dbReference>
<dbReference type="PROSITE" id="PS00357">
    <property type="entry name" value="HISTONE_H2B"/>
    <property type="match status" value="1"/>
</dbReference>
<feature type="initiator methionine" description="Removed" evidence="1">
    <location>
        <position position="1"/>
    </location>
</feature>
<feature type="chain" id="PRO_0000245300" description="Histone H2B">
    <location>
        <begin position="2"/>
        <end position="142"/>
    </location>
</feature>
<feature type="region of interest" description="Disordered" evidence="2">
    <location>
        <begin position="1"/>
        <end position="50"/>
    </location>
</feature>
<feature type="compositionally biased region" description="Basic and acidic residues" evidence="2">
    <location>
        <begin position="1"/>
        <end position="10"/>
    </location>
</feature>
<feature type="compositionally biased region" description="Low complexity" evidence="2">
    <location>
        <begin position="11"/>
        <end position="28"/>
    </location>
</feature>
<feature type="compositionally biased region" description="Basic and acidic residues" evidence="2">
    <location>
        <begin position="40"/>
        <end position="50"/>
    </location>
</feature>
<feature type="modified residue" description="N6-acetyllysine; alternate" evidence="1">
    <location>
        <position position="8"/>
    </location>
</feature>
<feature type="modified residue" description="N6-acetyllysine; alternate" evidence="1">
    <location>
        <position position="9"/>
    </location>
</feature>
<feature type="modified residue" description="N6-acetyllysine" evidence="1">
    <location>
        <position position="24"/>
    </location>
</feature>
<feature type="cross-link" description="Glycyl lysine isopeptide (Lys-Gly) (interchain with G-Cter in SUMO); alternate" evidence="1">
    <location>
        <position position="8"/>
    </location>
</feature>
<feature type="cross-link" description="Glycyl lysine isopeptide (Lys-Gly) (interchain with G-Cter in SUMO); alternate" evidence="1">
    <location>
        <position position="9"/>
    </location>
</feature>
<feature type="cross-link" description="Glycyl lysine isopeptide (Lys-Gly) (interchain with G-Cter in ubiquitin)" evidence="1">
    <location>
        <position position="137"/>
    </location>
</feature>
<reference key="1">
    <citation type="journal article" date="2006" name="Nature">
        <title>Insights from the genome of the biotrophic fungal plant pathogen Ustilago maydis.</title>
        <authorList>
            <person name="Kaemper J."/>
            <person name="Kahmann R."/>
            <person name="Boelker M."/>
            <person name="Ma L.-J."/>
            <person name="Brefort T."/>
            <person name="Saville B.J."/>
            <person name="Banuett F."/>
            <person name="Kronstad J.W."/>
            <person name="Gold S.E."/>
            <person name="Mueller O."/>
            <person name="Perlin M.H."/>
            <person name="Woesten H.A.B."/>
            <person name="de Vries R."/>
            <person name="Ruiz-Herrera J."/>
            <person name="Reynaga-Pena C.G."/>
            <person name="Snetselaar K."/>
            <person name="McCann M."/>
            <person name="Perez-Martin J."/>
            <person name="Feldbruegge M."/>
            <person name="Basse C.W."/>
            <person name="Steinberg G."/>
            <person name="Ibeas J.I."/>
            <person name="Holloman W."/>
            <person name="Guzman P."/>
            <person name="Farman M.L."/>
            <person name="Stajich J.E."/>
            <person name="Sentandreu R."/>
            <person name="Gonzalez-Prieto J.M."/>
            <person name="Kennell J.C."/>
            <person name="Molina L."/>
            <person name="Schirawski J."/>
            <person name="Mendoza-Mendoza A."/>
            <person name="Greilinger D."/>
            <person name="Muench K."/>
            <person name="Roessel N."/>
            <person name="Scherer M."/>
            <person name="Vranes M."/>
            <person name="Ladendorf O."/>
            <person name="Vincon V."/>
            <person name="Fuchs U."/>
            <person name="Sandrock B."/>
            <person name="Meng S."/>
            <person name="Ho E.C.H."/>
            <person name="Cahill M.J."/>
            <person name="Boyce K.J."/>
            <person name="Klose J."/>
            <person name="Klosterman S.J."/>
            <person name="Deelstra H.J."/>
            <person name="Ortiz-Castellanos L."/>
            <person name="Li W."/>
            <person name="Sanchez-Alonso P."/>
            <person name="Schreier P.H."/>
            <person name="Haeuser-Hahn I."/>
            <person name="Vaupel M."/>
            <person name="Koopmann E."/>
            <person name="Friedrich G."/>
            <person name="Voss H."/>
            <person name="Schlueter T."/>
            <person name="Margolis J."/>
            <person name="Platt D."/>
            <person name="Swimmer C."/>
            <person name="Gnirke A."/>
            <person name="Chen F."/>
            <person name="Vysotskaia V."/>
            <person name="Mannhaupt G."/>
            <person name="Gueldener U."/>
            <person name="Muensterkoetter M."/>
            <person name="Haase D."/>
            <person name="Oesterheld M."/>
            <person name="Mewes H.-W."/>
            <person name="Mauceli E.W."/>
            <person name="DeCaprio D."/>
            <person name="Wade C.M."/>
            <person name="Butler J."/>
            <person name="Young S.K."/>
            <person name="Jaffe D.B."/>
            <person name="Calvo S.E."/>
            <person name="Nusbaum C."/>
            <person name="Galagan J.E."/>
            <person name="Birren B.W."/>
        </authorList>
    </citation>
    <scope>NUCLEOTIDE SEQUENCE [LARGE SCALE GENOMIC DNA]</scope>
    <source>
        <strain>DSM 14603 / FGSC 9021 / UM521</strain>
    </source>
</reference>
<reference key="2">
    <citation type="submission" date="2014-09" db="EMBL/GenBank/DDBJ databases">
        <authorList>
            <person name="Gueldener U."/>
            <person name="Muensterkoetter M."/>
            <person name="Walter M.C."/>
            <person name="Mannhaupt G."/>
            <person name="Kahmann R."/>
        </authorList>
    </citation>
    <scope>GENOME REANNOTATION</scope>
    <source>
        <strain>DSM 14603 / FGSC 9021 / UM521</strain>
    </source>
</reference>
<comment type="function">
    <text>Core component of nucleosome. Nucleosomes wrap and compact DNA into chromatin, limiting DNA accessibility to the cellular machineries which require DNA as a template. Histones thereby play a central role in transcription regulation, DNA repair, DNA replication and chromosomal stability. DNA accessibility is regulated via a complex set of post-translational modifications of histones, also called histone code, and nucleosome remodeling.</text>
</comment>
<comment type="subunit">
    <text>The nucleosome is a histone octamer containing two molecules each of H2A, H2B, H3 and H4 assembled in one H3-H4 heterotetramer and two H2A-H2B heterodimers. The octamer wraps approximately 147 bp of DNA.</text>
</comment>
<comment type="subcellular location">
    <subcellularLocation>
        <location evidence="1">Nucleus</location>
    </subcellularLocation>
    <subcellularLocation>
        <location evidence="1">Chromosome</location>
    </subcellularLocation>
</comment>
<comment type="PTM">
    <text evidence="1">Monoubiquitinated by the UBC2-BRE1 complex to form H2BK123ub1. H2BK123ub1 gives a specific tag for epigenetic transcriptional activation and is also prerequisite for H3K4me and H3K79me formation. H2BK123ub1 also modulates the formation of double-strand breaks during meiosis and is a prerequisite for DNA-damage checkpoint activation (By similarity).</text>
</comment>
<comment type="PTM">
    <text evidence="1">Acetylation of N-terminal lysines and particularly formation of H2BK11ac has a positive effect on transcription.</text>
</comment>
<comment type="PTM">
    <text evidence="1">Sumoylation to form H2BK6su or H2BK7su occurs preferentially near the telomeres and represses gene transcription.</text>
</comment>
<comment type="similarity">
    <text evidence="3">Belongs to the histone H2B family.</text>
</comment>
<comment type="caution">
    <text evidence="3">To ensure consistency between histone entries, we follow the 'Brno' nomenclature for histone modifications, with positions referring to those used in the literature for the 'closest' model organism. Due to slight variations in histone sequences between organisms and to the presence of initiator methionine in UniProtKB/Swiss-Prot sequences, the actual positions of modified amino acids in the sequence generally differ. In this entry the following conventions are used: H2BK6ac = acetylated Lys-8; H2BK6su = sumoylated Lys-8; H2BK7ac = acetylated Lys-9; H2BK7su = sumoylated Lys-9; H2BK11ac = acetylated Lys-24; H2BK123ub1 = monoubiquitinated Lys-137.</text>
</comment>
<sequence>MPPKPAEKKPSSTAGKAPASSAGKAPAEAAKKTSKAPAKSGEKKKATKVRKETYSTYIYRVLKQVHPDTGISNKAMAILNSFVQDIFERIATEASKLASYNKKSTISSREIQTAVRLILPGELSKHAISEGTKSVTKFSSSK</sequence>